<evidence type="ECO:0000250" key="1"/>
<evidence type="ECO:0000255" key="2"/>
<evidence type="ECO:0000256" key="3">
    <source>
        <dbReference type="SAM" id="MobiDB-lite"/>
    </source>
</evidence>
<evidence type="ECO:0000305" key="4"/>
<dbReference type="EMBL" id="AB089934">
    <property type="protein sequence ID" value="BAC57070.1"/>
    <property type="molecule type" value="mRNA"/>
</dbReference>
<dbReference type="RefSeq" id="NP_001027860.1">
    <property type="nucleotide sequence ID" value="NM_001032688.1"/>
</dbReference>
<dbReference type="STRING" id="31033.ENSTRUP00000079039"/>
<dbReference type="GeneID" id="446068"/>
<dbReference type="KEGG" id="tru:446068"/>
<dbReference type="CTD" id="4879"/>
<dbReference type="HOGENOM" id="CLU_126636_0_0_1"/>
<dbReference type="InParanoid" id="Q805D7"/>
<dbReference type="OrthoDB" id="9892281at2759"/>
<dbReference type="Proteomes" id="UP000005226">
    <property type="component" value="Unplaced"/>
</dbReference>
<dbReference type="GO" id="GO:0005737">
    <property type="term" value="C:cytoplasm"/>
    <property type="evidence" value="ECO:0007669"/>
    <property type="project" value="TreeGrafter"/>
</dbReference>
<dbReference type="GO" id="GO:0005615">
    <property type="term" value="C:extracellular space"/>
    <property type="evidence" value="ECO:0007669"/>
    <property type="project" value="TreeGrafter"/>
</dbReference>
<dbReference type="GO" id="GO:0005179">
    <property type="term" value="F:hormone activity"/>
    <property type="evidence" value="ECO:0007669"/>
    <property type="project" value="UniProtKB-KW"/>
</dbReference>
<dbReference type="GO" id="GO:0051427">
    <property type="term" value="F:hormone receptor binding"/>
    <property type="evidence" value="ECO:0007669"/>
    <property type="project" value="TreeGrafter"/>
</dbReference>
<dbReference type="GO" id="GO:0097746">
    <property type="term" value="P:blood vessel diameter maintenance"/>
    <property type="evidence" value="ECO:0007669"/>
    <property type="project" value="UniProtKB-KW"/>
</dbReference>
<dbReference type="GO" id="GO:0006182">
    <property type="term" value="P:cGMP biosynthetic process"/>
    <property type="evidence" value="ECO:0000250"/>
    <property type="project" value="UniProtKB"/>
</dbReference>
<dbReference type="GO" id="GO:0019934">
    <property type="term" value="P:cGMP-mediated signaling"/>
    <property type="evidence" value="ECO:0007669"/>
    <property type="project" value="TreeGrafter"/>
</dbReference>
<dbReference type="GO" id="GO:0003085">
    <property type="term" value="P:negative regulation of systemic arterial blood pressure"/>
    <property type="evidence" value="ECO:0007669"/>
    <property type="project" value="TreeGrafter"/>
</dbReference>
<dbReference type="GO" id="GO:0007218">
    <property type="term" value="P:neuropeptide signaling pathway"/>
    <property type="evidence" value="ECO:0007669"/>
    <property type="project" value="TreeGrafter"/>
</dbReference>
<dbReference type="GO" id="GO:0007168">
    <property type="term" value="P:receptor guanylyl cyclase signaling pathway"/>
    <property type="evidence" value="ECO:0000250"/>
    <property type="project" value="UniProtKB"/>
</dbReference>
<dbReference type="InterPro" id="IPR000663">
    <property type="entry name" value="Natr_peptide"/>
</dbReference>
<dbReference type="InterPro" id="IPR030480">
    <property type="entry name" value="Natr_peptide_CS"/>
</dbReference>
<dbReference type="InterPro" id="IPR050787">
    <property type="entry name" value="Natriuretic_peptide"/>
</dbReference>
<dbReference type="InterPro" id="IPR002408">
    <property type="entry name" value="Natriuretic_peptide_brain"/>
</dbReference>
<dbReference type="PANTHER" id="PTHR14066">
    <property type="entry name" value="ATRIAL NATRIURETIC FACTOR PRECURSOR"/>
    <property type="match status" value="1"/>
</dbReference>
<dbReference type="PANTHER" id="PTHR14066:SF10">
    <property type="entry name" value="NATRIURETIC PEPTIDES B"/>
    <property type="match status" value="1"/>
</dbReference>
<dbReference type="Pfam" id="PF00212">
    <property type="entry name" value="ANP"/>
    <property type="match status" value="1"/>
</dbReference>
<dbReference type="PRINTS" id="PR00712">
    <property type="entry name" value="BNATPEPTIDE"/>
</dbReference>
<dbReference type="PRINTS" id="PR00710">
    <property type="entry name" value="NATPEPTIDES"/>
</dbReference>
<dbReference type="SMART" id="SM00183">
    <property type="entry name" value="NAT_PEP"/>
    <property type="match status" value="1"/>
</dbReference>
<dbReference type="PROSITE" id="PS00263">
    <property type="entry name" value="NATRIURETIC_PEPTIDE"/>
    <property type="match status" value="1"/>
</dbReference>
<comment type="function">
    <text evidence="1">Cardiac hormone which may function as a paracrine antifibrotic factor in the heart. Also plays a key role in cardiovascular homeostasis through natriuresis, diuresis, vasorelaxation, and inhibition of renin and aldosterone secretion. Has a cGMP-stimulating activity (By similarity).</text>
</comment>
<comment type="subcellular location">
    <subcellularLocation>
        <location>Secreted</location>
    </subcellularLocation>
</comment>
<comment type="similarity">
    <text evidence="4">Belongs to the natriuretic peptide family.</text>
</comment>
<protein>
    <recommendedName>
        <fullName>Brain natriuretic peptide</fullName>
    </recommendedName>
    <alternativeName>
        <fullName>B-type natriuretic peptide</fullName>
    </alternativeName>
</protein>
<keyword id="KW-1015">Disulfide bond</keyword>
<keyword id="KW-0372">Hormone</keyword>
<keyword id="KW-1185">Reference proteome</keyword>
<keyword id="KW-0964">Secreted</keyword>
<keyword id="KW-0732">Signal</keyword>
<keyword id="KW-0838">Vasoactive</keyword>
<gene>
    <name type="primary">nppb</name>
    <name type="synonym">bnp</name>
</gene>
<sequence>MVVSFVSICGLLLIFNLPLSTSFPVLSDTDVDVLEAILHKLEESMSEETEEDQMVPANSESLEPVGSMKQTANRDQIRPVEVEAIREFLSANTRKNVQNDSSRRSSSCFGRRMDRIGSMSSLGCNTVGKYNPK</sequence>
<proteinExistence type="evidence at transcript level"/>
<accession>Q805D7</accession>
<organism>
    <name type="scientific">Takifugu rubripes</name>
    <name type="common">Japanese pufferfish</name>
    <name type="synonym">Fugu rubripes</name>
    <dbReference type="NCBI Taxonomy" id="31033"/>
    <lineage>
        <taxon>Eukaryota</taxon>
        <taxon>Metazoa</taxon>
        <taxon>Chordata</taxon>
        <taxon>Craniata</taxon>
        <taxon>Vertebrata</taxon>
        <taxon>Euteleostomi</taxon>
        <taxon>Actinopterygii</taxon>
        <taxon>Neopterygii</taxon>
        <taxon>Teleostei</taxon>
        <taxon>Neoteleostei</taxon>
        <taxon>Acanthomorphata</taxon>
        <taxon>Eupercaria</taxon>
        <taxon>Tetraodontiformes</taxon>
        <taxon>Tetradontoidea</taxon>
        <taxon>Tetraodontidae</taxon>
        <taxon>Takifugu</taxon>
    </lineage>
</organism>
<feature type="signal peptide" evidence="2">
    <location>
        <begin position="1"/>
        <end position="22"/>
    </location>
</feature>
<feature type="propeptide" id="PRO_0000001545">
    <location>
        <begin position="23"/>
        <end status="unknown"/>
    </location>
</feature>
<feature type="peptide" id="PRO_0000001546" description="Brain natriuretic peptide">
    <location>
        <begin status="unknown"/>
        <end position="133"/>
    </location>
</feature>
<feature type="region of interest" description="Disordered" evidence="3">
    <location>
        <begin position="44"/>
        <end position="76"/>
    </location>
</feature>
<feature type="region of interest" description="Disordered" evidence="3">
    <location>
        <begin position="93"/>
        <end position="112"/>
    </location>
</feature>
<feature type="compositionally biased region" description="Acidic residues" evidence="3">
    <location>
        <begin position="44"/>
        <end position="53"/>
    </location>
</feature>
<feature type="disulfide bond" evidence="1">
    <location>
        <begin position="108"/>
        <end position="124"/>
    </location>
</feature>
<name>ANFB_TAKRU</name>
<reference key="1">
    <citation type="journal article" date="2004" name="J. Mol. Endocrinol.">
        <title>Four natriuretic peptides (ANP, BNP, VNP and CNP) coexist in the sturgeon: identification of BNP in fish lineage.</title>
        <authorList>
            <person name="Kawakoshi A."/>
            <person name="Hyodo S."/>
            <person name="Inoue K."/>
            <person name="Kobayashi Y."/>
            <person name="Takei Y."/>
        </authorList>
    </citation>
    <scope>NUCLEOTIDE SEQUENCE [MRNA]</scope>
    <source>
        <tissue>Heart</tissue>
    </source>
</reference>